<protein>
    <recommendedName>
        <fullName evidence="1">Holliday junction branch migration complex subunit RuvA</fullName>
    </recommendedName>
</protein>
<organism>
    <name type="scientific">Bacillus cereus (strain AH187)</name>
    <dbReference type="NCBI Taxonomy" id="405534"/>
    <lineage>
        <taxon>Bacteria</taxon>
        <taxon>Bacillati</taxon>
        <taxon>Bacillota</taxon>
        <taxon>Bacilli</taxon>
        <taxon>Bacillales</taxon>
        <taxon>Bacillaceae</taxon>
        <taxon>Bacillus</taxon>
        <taxon>Bacillus cereus group</taxon>
    </lineage>
</organism>
<gene>
    <name evidence="1" type="primary">ruvA</name>
    <name type="ordered locus">BCAH187_A4555</name>
</gene>
<dbReference type="EMBL" id="CP001177">
    <property type="protein sequence ID" value="ACJ80899.1"/>
    <property type="molecule type" value="Genomic_DNA"/>
</dbReference>
<dbReference type="SMR" id="B7HQI0"/>
<dbReference type="KEGG" id="bcr:BCAH187_A4555"/>
<dbReference type="HOGENOM" id="CLU_087936_1_0_9"/>
<dbReference type="Proteomes" id="UP000002214">
    <property type="component" value="Chromosome"/>
</dbReference>
<dbReference type="GO" id="GO:0005737">
    <property type="term" value="C:cytoplasm"/>
    <property type="evidence" value="ECO:0007669"/>
    <property type="project" value="UniProtKB-SubCell"/>
</dbReference>
<dbReference type="GO" id="GO:0009379">
    <property type="term" value="C:Holliday junction helicase complex"/>
    <property type="evidence" value="ECO:0007669"/>
    <property type="project" value="InterPro"/>
</dbReference>
<dbReference type="GO" id="GO:0048476">
    <property type="term" value="C:Holliday junction resolvase complex"/>
    <property type="evidence" value="ECO:0007669"/>
    <property type="project" value="UniProtKB-UniRule"/>
</dbReference>
<dbReference type="GO" id="GO:0005524">
    <property type="term" value="F:ATP binding"/>
    <property type="evidence" value="ECO:0007669"/>
    <property type="project" value="InterPro"/>
</dbReference>
<dbReference type="GO" id="GO:0000400">
    <property type="term" value="F:four-way junction DNA binding"/>
    <property type="evidence" value="ECO:0007669"/>
    <property type="project" value="UniProtKB-UniRule"/>
</dbReference>
<dbReference type="GO" id="GO:0009378">
    <property type="term" value="F:four-way junction helicase activity"/>
    <property type="evidence" value="ECO:0007669"/>
    <property type="project" value="InterPro"/>
</dbReference>
<dbReference type="GO" id="GO:0006310">
    <property type="term" value="P:DNA recombination"/>
    <property type="evidence" value="ECO:0007669"/>
    <property type="project" value="UniProtKB-UniRule"/>
</dbReference>
<dbReference type="GO" id="GO:0006281">
    <property type="term" value="P:DNA repair"/>
    <property type="evidence" value="ECO:0007669"/>
    <property type="project" value="UniProtKB-UniRule"/>
</dbReference>
<dbReference type="CDD" id="cd14332">
    <property type="entry name" value="UBA_RuvA_C"/>
    <property type="match status" value="1"/>
</dbReference>
<dbReference type="Gene3D" id="1.10.150.20">
    <property type="entry name" value="5' to 3' exonuclease, C-terminal subdomain"/>
    <property type="match status" value="1"/>
</dbReference>
<dbReference type="Gene3D" id="1.10.8.10">
    <property type="entry name" value="DNA helicase RuvA subunit, C-terminal domain"/>
    <property type="match status" value="1"/>
</dbReference>
<dbReference type="Gene3D" id="2.40.50.140">
    <property type="entry name" value="Nucleic acid-binding proteins"/>
    <property type="match status" value="1"/>
</dbReference>
<dbReference type="HAMAP" id="MF_00031">
    <property type="entry name" value="DNA_HJ_migration_RuvA"/>
    <property type="match status" value="1"/>
</dbReference>
<dbReference type="InterPro" id="IPR013849">
    <property type="entry name" value="DNA_helicase_Holl-junc_RuvA_I"/>
</dbReference>
<dbReference type="InterPro" id="IPR003583">
    <property type="entry name" value="Hlx-hairpin-Hlx_DNA-bd_motif"/>
</dbReference>
<dbReference type="InterPro" id="IPR012340">
    <property type="entry name" value="NA-bd_OB-fold"/>
</dbReference>
<dbReference type="InterPro" id="IPR000085">
    <property type="entry name" value="RuvA"/>
</dbReference>
<dbReference type="InterPro" id="IPR010994">
    <property type="entry name" value="RuvA_2-like"/>
</dbReference>
<dbReference type="InterPro" id="IPR011114">
    <property type="entry name" value="RuvA_C"/>
</dbReference>
<dbReference type="InterPro" id="IPR036267">
    <property type="entry name" value="RuvA_C_sf"/>
</dbReference>
<dbReference type="NCBIfam" id="TIGR00084">
    <property type="entry name" value="ruvA"/>
    <property type="match status" value="1"/>
</dbReference>
<dbReference type="Pfam" id="PF14520">
    <property type="entry name" value="HHH_5"/>
    <property type="match status" value="1"/>
</dbReference>
<dbReference type="Pfam" id="PF07499">
    <property type="entry name" value="RuvA_C"/>
    <property type="match status" value="1"/>
</dbReference>
<dbReference type="Pfam" id="PF01330">
    <property type="entry name" value="RuvA_N"/>
    <property type="match status" value="1"/>
</dbReference>
<dbReference type="SMART" id="SM00278">
    <property type="entry name" value="HhH1"/>
    <property type="match status" value="2"/>
</dbReference>
<dbReference type="SUPFAM" id="SSF46929">
    <property type="entry name" value="DNA helicase RuvA subunit, C-terminal domain"/>
    <property type="match status" value="1"/>
</dbReference>
<dbReference type="SUPFAM" id="SSF50249">
    <property type="entry name" value="Nucleic acid-binding proteins"/>
    <property type="match status" value="1"/>
</dbReference>
<dbReference type="SUPFAM" id="SSF47781">
    <property type="entry name" value="RuvA domain 2-like"/>
    <property type="match status" value="1"/>
</dbReference>
<feature type="chain" id="PRO_1000195116" description="Holliday junction branch migration complex subunit RuvA">
    <location>
        <begin position="1"/>
        <end position="205"/>
    </location>
</feature>
<feature type="region of interest" description="Domain I" evidence="1">
    <location>
        <begin position="1"/>
        <end position="62"/>
    </location>
</feature>
<feature type="region of interest" description="Domain II" evidence="1">
    <location>
        <begin position="63"/>
        <end position="141"/>
    </location>
</feature>
<feature type="region of interest" description="Flexible linker" evidence="1">
    <location>
        <begin position="142"/>
        <end position="152"/>
    </location>
</feature>
<feature type="region of interest" description="Domain III" evidence="1">
    <location>
        <begin position="153"/>
        <end position="205"/>
    </location>
</feature>
<accession>B7HQI0</accession>
<reference key="1">
    <citation type="submission" date="2008-10" db="EMBL/GenBank/DDBJ databases">
        <title>Genome sequence of Bacillus cereus AH187.</title>
        <authorList>
            <person name="Dodson R.J."/>
            <person name="Durkin A.S."/>
            <person name="Rosovitz M.J."/>
            <person name="Rasko D.A."/>
            <person name="Kolsto A.B."/>
            <person name="Okstad O.A."/>
            <person name="Ravel J."/>
            <person name="Sutton G."/>
        </authorList>
    </citation>
    <scope>NUCLEOTIDE SEQUENCE [LARGE SCALE GENOMIC DNA]</scope>
    <source>
        <strain>AH187</strain>
    </source>
</reference>
<sequence length="205" mass="23194">MFEYVTGYVEYVGPEYVVIDHNGIGYQIFTPNPYVFQRSKQEIRVYTYHYVREDIMALYGFKTREERLLFTKLLGVSGIGPKGALAILASGQTGQVVQAIEHEDEKFLVKFPGVGKKTARQMILDLKGKLADVVPDAFVDLFSDEERFDEKKGSSAELDEALEALRALGYAEREVSRVVPELLKESLTTDQYIKKALSLLLNGKR</sequence>
<keyword id="KW-0963">Cytoplasm</keyword>
<keyword id="KW-0227">DNA damage</keyword>
<keyword id="KW-0233">DNA recombination</keyword>
<keyword id="KW-0234">DNA repair</keyword>
<keyword id="KW-0238">DNA-binding</keyword>
<evidence type="ECO:0000255" key="1">
    <source>
        <dbReference type="HAMAP-Rule" id="MF_00031"/>
    </source>
</evidence>
<comment type="function">
    <text evidence="1">The RuvA-RuvB-RuvC complex processes Holliday junction (HJ) DNA during genetic recombination and DNA repair, while the RuvA-RuvB complex plays an important role in the rescue of blocked DNA replication forks via replication fork reversal (RFR). RuvA specifically binds to HJ cruciform DNA, conferring on it an open structure. The RuvB hexamer acts as an ATP-dependent pump, pulling dsDNA into and through the RuvAB complex. HJ branch migration allows RuvC to scan DNA until it finds its consensus sequence, where it cleaves and resolves the cruciform DNA.</text>
</comment>
<comment type="subunit">
    <text evidence="1">Homotetramer. Forms an RuvA(8)-RuvB(12)-Holliday junction (HJ) complex. HJ DNA is sandwiched between 2 RuvA tetramers; dsDNA enters through RuvA and exits via RuvB. An RuvB hexamer assembles on each DNA strand where it exits the tetramer. Each RuvB hexamer is contacted by two RuvA subunits (via domain III) on 2 adjacent RuvB subunits; this complex drives branch migration. In the full resolvosome a probable DNA-RuvA(4)-RuvB(12)-RuvC(2) complex forms which resolves the HJ.</text>
</comment>
<comment type="subcellular location">
    <subcellularLocation>
        <location evidence="1">Cytoplasm</location>
    </subcellularLocation>
</comment>
<comment type="domain">
    <text evidence="1">Has three domains with a flexible linker between the domains II and III and assumes an 'L' shape. Domain III is highly mobile and contacts RuvB.</text>
</comment>
<comment type="similarity">
    <text evidence="1">Belongs to the RuvA family.</text>
</comment>
<proteinExistence type="inferred from homology"/>
<name>RUVA_BACC7</name>